<dbReference type="EMBL" id="M27533">
    <property type="protein sequence ID" value="AAA36045.1"/>
    <property type="molecule type" value="mRNA"/>
</dbReference>
<dbReference type="EMBL" id="M83077">
    <property type="protein sequence ID" value="AAA58390.1"/>
    <property type="molecule type" value="Genomic_DNA"/>
</dbReference>
<dbReference type="EMBL" id="M83072">
    <property type="protein sequence ID" value="AAA58390.1"/>
    <property type="status" value="JOINED"/>
    <property type="molecule type" value="Genomic_DNA"/>
</dbReference>
<dbReference type="EMBL" id="M83073">
    <property type="protein sequence ID" value="AAA58390.1"/>
    <property type="status" value="JOINED"/>
    <property type="molecule type" value="Genomic_DNA"/>
</dbReference>
<dbReference type="EMBL" id="M83074">
    <property type="protein sequence ID" value="AAA58390.1"/>
    <property type="status" value="JOINED"/>
    <property type="molecule type" value="Genomic_DNA"/>
</dbReference>
<dbReference type="EMBL" id="AY197777">
    <property type="protein sequence ID" value="AAO39208.1"/>
    <property type="molecule type" value="mRNA"/>
</dbReference>
<dbReference type="EMBL" id="AY197778">
    <property type="protein sequence ID" value="AAO39209.1"/>
    <property type="molecule type" value="mRNA"/>
</dbReference>
<dbReference type="EMBL" id="AC073352">
    <property type="status" value="NOT_ANNOTATED_CDS"/>
    <property type="molecule type" value="Genomic_DNA"/>
</dbReference>
<dbReference type="EMBL" id="BC042665">
    <property type="protein sequence ID" value="AAH42665.1"/>
    <property type="molecule type" value="mRNA"/>
</dbReference>
<dbReference type="CCDS" id="CCDS2989.1">
    <molecule id="P33681-1"/>
</dbReference>
<dbReference type="PIR" id="I54495">
    <property type="entry name" value="A45803"/>
</dbReference>
<dbReference type="RefSeq" id="NP_005182.1">
    <molecule id="P33681-1"/>
    <property type="nucleotide sequence ID" value="NM_005191.4"/>
</dbReference>
<dbReference type="PDB" id="1DR9">
    <property type="method" value="X-ray"/>
    <property type="resolution" value="3.00 A"/>
    <property type="chains" value="A=35-233"/>
</dbReference>
<dbReference type="PDB" id="1I8L">
    <property type="method" value="X-ray"/>
    <property type="resolution" value="3.00 A"/>
    <property type="chains" value="A/B=35-242"/>
</dbReference>
<dbReference type="PDB" id="7TPS">
    <property type="method" value="X-ray"/>
    <property type="resolution" value="3.15 A"/>
    <property type="chains" value="A/C=35-140"/>
</dbReference>
<dbReference type="PDB" id="8FXW">
    <property type="method" value="EM"/>
    <property type="resolution" value="2.70 A"/>
    <property type="chains" value="C/E/G/H/J/L=35-235"/>
</dbReference>
<dbReference type="PDB" id="8FXZ">
    <property type="method" value="EM"/>
    <property type="resolution" value="2.86 A"/>
    <property type="chains" value="C/E/G/H/J/L/N=35-235"/>
</dbReference>
<dbReference type="PDB" id="8HXA">
    <property type="method" value="EM"/>
    <property type="resolution" value="3.04 A"/>
    <property type="chains" value="G/H/I/J/K/L=35-234"/>
</dbReference>
<dbReference type="PDBsum" id="1DR9"/>
<dbReference type="PDBsum" id="1I8L"/>
<dbReference type="PDBsum" id="7TPS"/>
<dbReference type="PDBsum" id="8FXW"/>
<dbReference type="PDBsum" id="8FXZ"/>
<dbReference type="PDBsum" id="8HXA"/>
<dbReference type="EMDB" id="EMD-29546"/>
<dbReference type="EMDB" id="EMD-29549"/>
<dbReference type="EMDB" id="EMD-35074"/>
<dbReference type="SMR" id="P33681"/>
<dbReference type="BioGRID" id="107379">
    <property type="interactions" value="259"/>
</dbReference>
<dbReference type="DIP" id="DIP-6044N"/>
<dbReference type="FunCoup" id="P33681">
    <property type="interactions" value="404"/>
</dbReference>
<dbReference type="IntAct" id="P33681">
    <property type="interactions" value="76"/>
</dbReference>
<dbReference type="STRING" id="9606.ENSP00000264246"/>
<dbReference type="ChEMBL" id="CHEMBL2364157"/>
<dbReference type="DrugBank" id="DB01281">
    <property type="generic name" value="Abatacept"/>
</dbReference>
<dbReference type="DrugBank" id="DB06681">
    <property type="generic name" value="Belatacept"/>
</dbReference>
<dbReference type="DrugBank" id="DB04901">
    <property type="generic name" value="Galiximab"/>
</dbReference>
<dbReference type="DrugCentral" id="P33681"/>
<dbReference type="GuidetoPHARMACOLOGY" id="2744"/>
<dbReference type="GlyCosmos" id="P33681">
    <property type="glycosylation" value="8 sites, No reported glycans"/>
</dbReference>
<dbReference type="GlyGen" id="P33681">
    <property type="glycosylation" value="9 sites, 2 N-linked glycans (1 site)"/>
</dbReference>
<dbReference type="iPTMnet" id="P33681"/>
<dbReference type="PhosphoSitePlus" id="P33681"/>
<dbReference type="BioMuta" id="CD80"/>
<dbReference type="DMDM" id="461606"/>
<dbReference type="MassIVE" id="P33681"/>
<dbReference type="PaxDb" id="9606-ENSP00000264246"/>
<dbReference type="PeptideAtlas" id="P33681"/>
<dbReference type="ProteomicsDB" id="54922">
    <molecule id="P33681-1"/>
</dbReference>
<dbReference type="ProteomicsDB" id="62752"/>
<dbReference type="ProteomicsDB" id="62753"/>
<dbReference type="ABCD" id="P33681">
    <property type="antibodies" value="21 sequenced antibodies"/>
</dbReference>
<dbReference type="Antibodypedia" id="16574">
    <property type="antibodies" value="2389 antibodies from 53 providers"/>
</dbReference>
<dbReference type="DNASU" id="941"/>
<dbReference type="Ensembl" id="ENST00000264246.8">
    <molecule id="P33681-1"/>
    <property type="protein sequence ID" value="ENSP00000264246.3"/>
    <property type="gene ID" value="ENSG00000121594.12"/>
</dbReference>
<dbReference type="Ensembl" id="ENST00000383669.3">
    <molecule id="P33681-2"/>
    <property type="protein sequence ID" value="ENSP00000373165.3"/>
    <property type="gene ID" value="ENSG00000121594.12"/>
</dbReference>
<dbReference type="Ensembl" id="ENST00000478182.5">
    <molecule id="P33681-1"/>
    <property type="protein sequence ID" value="ENSP00000418364.1"/>
    <property type="gene ID" value="ENSG00000121594.12"/>
</dbReference>
<dbReference type="GeneID" id="941"/>
<dbReference type="KEGG" id="hsa:941"/>
<dbReference type="MANE-Select" id="ENST00000264246.8">
    <property type="protein sequence ID" value="ENSP00000264246.3"/>
    <property type="RefSeq nucleotide sequence ID" value="NM_005191.4"/>
    <property type="RefSeq protein sequence ID" value="NP_005182.1"/>
</dbReference>
<dbReference type="UCSC" id="uc003ecq.4">
    <molecule id="P33681-1"/>
    <property type="organism name" value="human"/>
</dbReference>
<dbReference type="AGR" id="HGNC:1700"/>
<dbReference type="CTD" id="941"/>
<dbReference type="DisGeNET" id="941"/>
<dbReference type="GeneCards" id="CD80"/>
<dbReference type="HGNC" id="HGNC:1700">
    <property type="gene designation" value="CD80"/>
</dbReference>
<dbReference type="HPA" id="ENSG00000121594">
    <property type="expression patterns" value="Tissue enhanced (lung, lymphoid tissue)"/>
</dbReference>
<dbReference type="MIM" id="112203">
    <property type="type" value="gene"/>
</dbReference>
<dbReference type="neXtProt" id="NX_P33681"/>
<dbReference type="OpenTargets" id="ENSG00000121594"/>
<dbReference type="PharmGKB" id="PA26239"/>
<dbReference type="VEuPathDB" id="HostDB:ENSG00000121594"/>
<dbReference type="eggNOG" id="ENOG502S5B5">
    <property type="taxonomic scope" value="Eukaryota"/>
</dbReference>
<dbReference type="GeneTree" id="ENSGT00940000162632"/>
<dbReference type="HOGENOM" id="CLU_071073_2_0_1"/>
<dbReference type="InParanoid" id="P33681"/>
<dbReference type="OMA" id="HMTSVML"/>
<dbReference type="OrthoDB" id="9904387at2759"/>
<dbReference type="PAN-GO" id="P33681">
    <property type="GO annotations" value="7 GO annotations based on evolutionary models"/>
</dbReference>
<dbReference type="PhylomeDB" id="P33681"/>
<dbReference type="TreeFam" id="TF351094"/>
<dbReference type="PathwayCommons" id="P33681"/>
<dbReference type="Reactome" id="R-HSA-1257604">
    <property type="pathway name" value="PIP3 activates AKT signaling"/>
</dbReference>
<dbReference type="Reactome" id="R-HSA-2219530">
    <property type="pathway name" value="Constitutive Signaling by Aberrant PI3K in Cancer"/>
</dbReference>
<dbReference type="Reactome" id="R-HSA-389356">
    <property type="pathway name" value="Co-stimulation by CD28"/>
</dbReference>
<dbReference type="Reactome" id="R-HSA-389357">
    <property type="pathway name" value="CD28 dependent PI3K/Akt signaling"/>
</dbReference>
<dbReference type="Reactome" id="R-HSA-389359">
    <property type="pathway name" value="CD28 dependent Vav1 pathway"/>
</dbReference>
<dbReference type="Reactome" id="R-HSA-389513">
    <property type="pathway name" value="Co-inhibition by CTLA4"/>
</dbReference>
<dbReference type="Reactome" id="R-HSA-6783783">
    <property type="pathway name" value="Interleukin-10 signaling"/>
</dbReference>
<dbReference type="Reactome" id="R-HSA-6811558">
    <property type="pathway name" value="PI5P, PP2A and IER3 Regulate PI3K/AKT Signaling"/>
</dbReference>
<dbReference type="SignaLink" id="P33681"/>
<dbReference type="SIGNOR" id="P33681"/>
<dbReference type="BioGRID-ORCS" id="941">
    <property type="hits" value="7 hits in 1168 CRISPR screens"/>
</dbReference>
<dbReference type="ChiTaRS" id="CD80">
    <property type="organism name" value="human"/>
</dbReference>
<dbReference type="EvolutionaryTrace" id="P33681"/>
<dbReference type="GeneWiki" id="CD80"/>
<dbReference type="GenomeRNAi" id="941"/>
<dbReference type="Pharos" id="P33681">
    <property type="development level" value="Tclin"/>
</dbReference>
<dbReference type="PRO" id="PR:P33681"/>
<dbReference type="Proteomes" id="UP000005640">
    <property type="component" value="Chromosome 3"/>
</dbReference>
<dbReference type="RNAct" id="P33681">
    <property type="molecule type" value="protein"/>
</dbReference>
<dbReference type="Bgee" id="ENSG00000121594">
    <property type="expression patterns" value="Expressed in male germ line stem cell (sensu Vertebrata) in testis and 101 other cell types or tissues"/>
</dbReference>
<dbReference type="ExpressionAtlas" id="P33681">
    <property type="expression patterns" value="baseline and differential"/>
</dbReference>
<dbReference type="GO" id="GO:0009986">
    <property type="term" value="C:cell surface"/>
    <property type="evidence" value="ECO:0007005"/>
    <property type="project" value="UniProtKB"/>
</dbReference>
<dbReference type="GO" id="GO:0009897">
    <property type="term" value="C:external side of plasma membrane"/>
    <property type="evidence" value="ECO:0000318"/>
    <property type="project" value="GO_Central"/>
</dbReference>
<dbReference type="GO" id="GO:0005886">
    <property type="term" value="C:plasma membrane"/>
    <property type="evidence" value="ECO:0000304"/>
    <property type="project" value="Reactome"/>
</dbReference>
<dbReference type="GO" id="GO:0098636">
    <property type="term" value="C:protein complex involved in cell adhesion"/>
    <property type="evidence" value="ECO:0000314"/>
    <property type="project" value="MGI"/>
</dbReference>
<dbReference type="GO" id="GO:0015026">
    <property type="term" value="F:coreceptor activity"/>
    <property type="evidence" value="ECO:0000303"/>
    <property type="project" value="UniProtKB"/>
</dbReference>
<dbReference type="GO" id="GO:0048018">
    <property type="term" value="F:receptor ligand activity"/>
    <property type="evidence" value="ECO:0000314"/>
    <property type="project" value="UniProt"/>
</dbReference>
<dbReference type="GO" id="GO:0001618">
    <property type="term" value="F:virus receptor activity"/>
    <property type="evidence" value="ECO:0007669"/>
    <property type="project" value="UniProtKB-KW"/>
</dbReference>
<dbReference type="GO" id="GO:0007166">
    <property type="term" value="P:cell surface receptor signaling pathway"/>
    <property type="evidence" value="ECO:0000318"/>
    <property type="project" value="GO_Central"/>
</dbReference>
<dbReference type="GO" id="GO:0071222">
    <property type="term" value="P:cellular response to lipopolysaccharide"/>
    <property type="evidence" value="ECO:0000318"/>
    <property type="project" value="GO_Central"/>
</dbReference>
<dbReference type="GO" id="GO:0006955">
    <property type="term" value="P:immune response"/>
    <property type="evidence" value="ECO:0000318"/>
    <property type="project" value="GO_Central"/>
</dbReference>
<dbReference type="GO" id="GO:0035556">
    <property type="term" value="P:intracellular signal transduction"/>
    <property type="evidence" value="ECO:0000303"/>
    <property type="project" value="UniProtKB"/>
</dbReference>
<dbReference type="GO" id="GO:0002710">
    <property type="term" value="P:negative regulation of T cell mediated immunity"/>
    <property type="evidence" value="ECO:0000314"/>
    <property type="project" value="UniProt"/>
</dbReference>
<dbReference type="GO" id="GO:0042130">
    <property type="term" value="P:negative regulation of T cell proliferation"/>
    <property type="evidence" value="ECO:0000318"/>
    <property type="project" value="GO_Central"/>
</dbReference>
<dbReference type="GO" id="GO:0045893">
    <property type="term" value="P:positive regulation of DNA-templated transcription"/>
    <property type="evidence" value="ECO:0000303"/>
    <property type="project" value="UniProtKB"/>
</dbReference>
<dbReference type="GO" id="GO:0032725">
    <property type="term" value="P:positive regulation of granulocyte macrophage colony-stimulating factor production"/>
    <property type="evidence" value="ECO:0000303"/>
    <property type="project" value="UniProtKB"/>
</dbReference>
<dbReference type="GO" id="GO:0032743">
    <property type="term" value="P:positive regulation of interleukin-2 production"/>
    <property type="evidence" value="ECO:0000303"/>
    <property type="project" value="UniProtKB"/>
</dbReference>
<dbReference type="GO" id="GO:0050731">
    <property type="term" value="P:positive regulation of peptidyl-tyrosine phosphorylation"/>
    <property type="evidence" value="ECO:0000314"/>
    <property type="project" value="UniProtKB"/>
</dbReference>
<dbReference type="GO" id="GO:0009967">
    <property type="term" value="P:positive regulation of signal transduction"/>
    <property type="evidence" value="ECO:0000303"/>
    <property type="project" value="UniProtKB"/>
</dbReference>
<dbReference type="GO" id="GO:0042102">
    <property type="term" value="P:positive regulation of T cell proliferation"/>
    <property type="evidence" value="ECO:0000318"/>
    <property type="project" value="GO_Central"/>
</dbReference>
<dbReference type="GO" id="GO:0045627">
    <property type="term" value="P:positive regulation of T-helper 1 cell differentiation"/>
    <property type="evidence" value="ECO:0000303"/>
    <property type="project" value="UniProtKB"/>
</dbReference>
<dbReference type="GO" id="GO:0042110">
    <property type="term" value="P:T cell activation"/>
    <property type="evidence" value="ECO:0000314"/>
    <property type="project" value="UniProt"/>
</dbReference>
<dbReference type="GO" id="GO:0031295">
    <property type="term" value="P:T cell costimulation"/>
    <property type="evidence" value="ECO:0000318"/>
    <property type="project" value="GO_Central"/>
</dbReference>
<dbReference type="CDD" id="cd16083">
    <property type="entry name" value="IgC1_CD80"/>
    <property type="match status" value="1"/>
</dbReference>
<dbReference type="CDD" id="cd16086">
    <property type="entry name" value="IgV_CD80"/>
    <property type="match status" value="1"/>
</dbReference>
<dbReference type="FunFam" id="2.60.40.10:FF:000910">
    <property type="entry name" value="T-lymphocyte activation antigen CD80"/>
    <property type="match status" value="1"/>
</dbReference>
<dbReference type="FunFam" id="2.60.40.10:FF:001077">
    <property type="entry name" value="T-lymphocyte activation antigen CD80"/>
    <property type="match status" value="1"/>
</dbReference>
<dbReference type="Gene3D" id="2.60.40.10">
    <property type="entry name" value="Immunoglobulins"/>
    <property type="match status" value="2"/>
</dbReference>
<dbReference type="InterPro" id="IPR013162">
    <property type="entry name" value="CD80_C2-set"/>
</dbReference>
<dbReference type="InterPro" id="IPR037676">
    <property type="entry name" value="CD80_IgC"/>
</dbReference>
<dbReference type="InterPro" id="IPR042711">
    <property type="entry name" value="CD80_IgV"/>
</dbReference>
<dbReference type="InterPro" id="IPR007110">
    <property type="entry name" value="Ig-like_dom"/>
</dbReference>
<dbReference type="InterPro" id="IPR036179">
    <property type="entry name" value="Ig-like_dom_sf"/>
</dbReference>
<dbReference type="InterPro" id="IPR013783">
    <property type="entry name" value="Ig-like_fold"/>
</dbReference>
<dbReference type="InterPro" id="IPR003599">
    <property type="entry name" value="Ig_sub"/>
</dbReference>
<dbReference type="InterPro" id="IPR013106">
    <property type="entry name" value="Ig_V-set"/>
</dbReference>
<dbReference type="InterPro" id="IPR051713">
    <property type="entry name" value="T-cell_Activation_Regulation"/>
</dbReference>
<dbReference type="PANTHER" id="PTHR25466">
    <property type="entry name" value="T-LYMPHOCYTE ACTIVATION ANTIGEN"/>
    <property type="match status" value="1"/>
</dbReference>
<dbReference type="PANTHER" id="PTHR25466:SF4">
    <property type="entry name" value="T-LYMPHOCYTE ACTIVATION ANTIGEN CD80"/>
    <property type="match status" value="1"/>
</dbReference>
<dbReference type="Pfam" id="PF08205">
    <property type="entry name" value="C2-set_2"/>
    <property type="match status" value="1"/>
</dbReference>
<dbReference type="Pfam" id="PF07686">
    <property type="entry name" value="V-set"/>
    <property type="match status" value="1"/>
</dbReference>
<dbReference type="SMART" id="SM00409">
    <property type="entry name" value="IG"/>
    <property type="match status" value="1"/>
</dbReference>
<dbReference type="SUPFAM" id="SSF48726">
    <property type="entry name" value="Immunoglobulin"/>
    <property type="match status" value="2"/>
</dbReference>
<dbReference type="PROSITE" id="PS50835">
    <property type="entry name" value="IG_LIKE"/>
    <property type="match status" value="2"/>
</dbReference>
<keyword id="KW-0002">3D-structure</keyword>
<keyword id="KW-0025">Alternative splicing</keyword>
<keyword id="KW-1003">Cell membrane</keyword>
<keyword id="KW-0903">Direct protein sequencing</keyword>
<keyword id="KW-1015">Disulfide bond</keyword>
<keyword id="KW-0325">Glycoprotein</keyword>
<keyword id="KW-1183">Host cell receptor for virus entry</keyword>
<keyword id="KW-0945">Host-virus interaction</keyword>
<keyword id="KW-0393">Immunoglobulin domain</keyword>
<keyword id="KW-0449">Lipoprotein</keyword>
<keyword id="KW-0472">Membrane</keyword>
<keyword id="KW-0564">Palmitate</keyword>
<keyword id="KW-0597">Phosphoprotein</keyword>
<keyword id="KW-1267">Proteomics identification</keyword>
<keyword id="KW-0675">Receptor</keyword>
<keyword id="KW-1185">Reference proteome</keyword>
<keyword id="KW-0732">Signal</keyword>
<keyword id="KW-0812">Transmembrane</keyword>
<keyword id="KW-1133">Transmembrane helix</keyword>
<accession>P33681</accession>
<accession>Q5DTA9</accession>
<accession>Q5DTB0</accession>
<evidence type="ECO:0000250" key="1">
    <source>
        <dbReference type="UniProtKB" id="Q00609"/>
    </source>
</evidence>
<evidence type="ECO:0000255" key="2"/>
<evidence type="ECO:0000255" key="3">
    <source>
        <dbReference type="PROSITE-ProRule" id="PRU00114"/>
    </source>
</evidence>
<evidence type="ECO:0000269" key="4">
    <source>
    </source>
</evidence>
<evidence type="ECO:0000269" key="5">
    <source>
    </source>
</evidence>
<evidence type="ECO:0000269" key="6">
    <source>
    </source>
</evidence>
<evidence type="ECO:0000269" key="7">
    <source>
    </source>
</evidence>
<evidence type="ECO:0000269" key="8">
    <source>
    </source>
</evidence>
<evidence type="ECO:0000269" key="9">
    <source>
    </source>
</evidence>
<evidence type="ECO:0000269" key="10">
    <source>
    </source>
</evidence>
<evidence type="ECO:0000269" key="11">
    <source>
    </source>
</evidence>
<evidence type="ECO:0000269" key="12">
    <source>
    </source>
</evidence>
<evidence type="ECO:0000269" key="13">
    <source>
    </source>
</evidence>
<evidence type="ECO:0000303" key="14">
    <source>
    </source>
</evidence>
<evidence type="ECO:0000305" key="15"/>
<evidence type="ECO:0007744" key="16">
    <source>
    </source>
</evidence>
<evidence type="ECO:0007829" key="17">
    <source>
        <dbReference type="PDB" id="1DR9"/>
    </source>
</evidence>
<feature type="signal peptide" evidence="10">
    <location>
        <begin position="1"/>
        <end position="34"/>
    </location>
</feature>
<feature type="chain" id="PRO_0000014547" description="T-lymphocyte activation antigen CD80">
    <location>
        <begin position="35"/>
        <end position="288"/>
    </location>
</feature>
<feature type="topological domain" description="Extracellular" evidence="2">
    <location>
        <begin position="35"/>
        <end position="242"/>
    </location>
</feature>
<feature type="transmembrane region" description="Helical" evidence="2">
    <location>
        <begin position="243"/>
        <end position="263"/>
    </location>
</feature>
<feature type="topological domain" description="Cytoplasmic" evidence="2">
    <location>
        <begin position="264"/>
        <end position="288"/>
    </location>
</feature>
<feature type="domain" description="Ig-like V-type">
    <location>
        <begin position="35"/>
        <end position="135"/>
    </location>
</feature>
<feature type="domain" description="Ig-like C2-type">
    <location>
        <begin position="145"/>
        <end position="230"/>
    </location>
</feature>
<feature type="modified residue" description="Phosphoserine" evidence="16">
    <location>
        <position position="284"/>
    </location>
</feature>
<feature type="lipid moiety-binding region" description="S-palmitoyl cysteine" evidence="13">
    <location>
        <position position="261"/>
    </location>
</feature>
<feature type="lipid moiety-binding region" description="S-palmitoyl cysteine" evidence="13">
    <location>
        <position position="262"/>
    </location>
</feature>
<feature type="lipid moiety-binding region" description="S-palmitoyl cysteine" evidence="13">
    <location>
        <position position="266"/>
    </location>
</feature>
<feature type="lipid moiety-binding region" description="S-palmitoyl cysteine" evidence="13">
    <location>
        <position position="271"/>
    </location>
</feature>
<feature type="glycosylation site" description="N-linked (GlcNAc...) asparagine" evidence="6">
    <location>
        <position position="53"/>
    </location>
</feature>
<feature type="glycosylation site" description="N-linked (GlcNAc...) asparagine" evidence="6">
    <location>
        <position position="89"/>
    </location>
</feature>
<feature type="glycosylation site" description="N-linked (GlcNAc...) asparagine" evidence="2">
    <location>
        <position position="98"/>
    </location>
</feature>
<feature type="glycosylation site" description="N-linked (GlcNAc...) asparagine" evidence="6">
    <location>
        <position position="186"/>
    </location>
</feature>
<feature type="glycosylation site" description="N-linked (GlcNAc...) asparagine" evidence="6">
    <location>
        <position position="207"/>
    </location>
</feature>
<feature type="glycosylation site" description="N-linked (GlcNAc...) asparagine" evidence="2">
    <location>
        <position position="211"/>
    </location>
</feature>
<feature type="glycosylation site" description="N-linked (GlcNAc...) asparagine" evidence="6">
    <location>
        <position position="226"/>
    </location>
</feature>
<feature type="glycosylation site" description="N-linked (GlcNAc...) asparagine" evidence="2">
    <location>
        <position position="232"/>
    </location>
</feature>
<feature type="disulfide bond" evidence="3 6">
    <location>
        <begin position="50"/>
        <end position="116"/>
    </location>
</feature>
<feature type="disulfide bond" evidence="3 6">
    <location>
        <begin position="162"/>
        <end position="216"/>
    </location>
</feature>
<feature type="splice variant" id="VSP_047698" description="In isoform 3." evidence="14">
    <original>A</original>
    <variation>G</variation>
    <location>
        <position position="140"/>
    </location>
</feature>
<feature type="splice variant" id="VSP_047699" description="In isoform 3." evidence="14">
    <location>
        <begin position="141"/>
        <end position="266"/>
    </location>
</feature>
<feature type="splice variant" id="VSP_047700" description="In isoform 2." evidence="14">
    <original>TKQEHFPDNLLPSWAITLISVNGIFVICCLTYC</original>
    <variation>S</variation>
    <location>
        <begin position="234"/>
        <end position="266"/>
    </location>
</feature>
<feature type="mutagenesis site" description="Loss of costimulatory function upon T-cell activation; when associated with S-262, S-266 and S-271." evidence="13">
    <original>C</original>
    <variation>S</variation>
    <location>
        <position position="261"/>
    </location>
</feature>
<feature type="mutagenesis site" description="Loss of costimulatory function upon T-cell activation; when associated with S-261, S-266 and S-271." evidence="13">
    <original>C</original>
    <variation>S</variation>
    <location>
        <position position="262"/>
    </location>
</feature>
<feature type="mutagenesis site" description="Loss of costimulatory function upon T-cell activation; when associated with S-261, S-262 and S-271." evidence="13">
    <original>C</original>
    <variation>S</variation>
    <location>
        <position position="266"/>
    </location>
</feature>
<feature type="mutagenesis site" description="Loss of costimulatory function upon T-cell activation; when associated with S-261, S-262 and S-266." evidence="13">
    <original>C</original>
    <variation>S</variation>
    <location>
        <position position="271"/>
    </location>
</feature>
<feature type="strand" evidence="17">
    <location>
        <begin position="37"/>
        <end position="41"/>
    </location>
</feature>
<feature type="strand" evidence="17">
    <location>
        <begin position="46"/>
        <end position="48"/>
    </location>
</feature>
<feature type="helix" evidence="17">
    <location>
        <begin position="58"/>
        <end position="61"/>
    </location>
</feature>
<feature type="strand" evidence="17">
    <location>
        <begin position="63"/>
        <end position="68"/>
    </location>
</feature>
<feature type="strand" evidence="17">
    <location>
        <begin position="71"/>
        <end position="77"/>
    </location>
</feature>
<feature type="strand" evidence="17">
    <location>
        <begin position="80"/>
        <end position="83"/>
    </location>
</feature>
<feature type="helix" evidence="17">
    <location>
        <begin position="85"/>
        <end position="88"/>
    </location>
</feature>
<feature type="strand" evidence="17">
    <location>
        <begin position="91"/>
        <end position="95"/>
    </location>
</feature>
<feature type="turn" evidence="17">
    <location>
        <begin position="96"/>
        <end position="99"/>
    </location>
</feature>
<feature type="strand" evidence="17">
    <location>
        <begin position="100"/>
        <end position="103"/>
    </location>
</feature>
<feature type="helix" evidence="17">
    <location>
        <begin position="108"/>
        <end position="110"/>
    </location>
</feature>
<feature type="strand" evidence="17">
    <location>
        <begin position="112"/>
        <end position="120"/>
    </location>
</feature>
<feature type="strand" evidence="17">
    <location>
        <begin position="127"/>
        <end position="139"/>
    </location>
</feature>
<feature type="strand" evidence="17">
    <location>
        <begin position="146"/>
        <end position="151"/>
    </location>
</feature>
<feature type="strand" evidence="17">
    <location>
        <begin position="157"/>
        <end position="169"/>
    </location>
</feature>
<feature type="strand" evidence="17">
    <location>
        <begin position="171"/>
        <end position="179"/>
    </location>
</feature>
<feature type="strand" evidence="17">
    <location>
        <begin position="185"/>
        <end position="191"/>
    </location>
</feature>
<feature type="turn" evidence="17">
    <location>
        <begin position="193"/>
        <end position="195"/>
    </location>
</feature>
<feature type="strand" evidence="17">
    <location>
        <begin position="198"/>
        <end position="207"/>
    </location>
</feature>
<feature type="strand" evidence="17">
    <location>
        <begin position="212"/>
        <end position="220"/>
    </location>
</feature>
<feature type="strand" evidence="17">
    <location>
        <begin position="225"/>
        <end position="231"/>
    </location>
</feature>
<reference key="1">
    <citation type="journal article" date="1989" name="J. Immunol.">
        <title>B7, a new member of the Ig superfamily with unique expression on activated and neoplastic B cells.</title>
        <authorList>
            <person name="Freeman G.J."/>
            <person name="Freedman A.S."/>
            <person name="Segil J.M."/>
            <person name="Lee G."/>
            <person name="Whitman J.F."/>
            <person name="Nadler L.M."/>
        </authorList>
    </citation>
    <scope>NUCLEOTIDE SEQUENCE [MRNA] (ISOFORM 1)</scope>
    <source>
        <tissue>Lymphoid tissue</tissue>
    </source>
</reference>
<reference key="2">
    <citation type="journal article" date="1992" name="Immunogenetics">
        <title>Genomic organization and chromosomal location of the human gene encoding the B-lymphocyte activation antigen B7.</title>
        <authorList>
            <person name="Selvakumar A."/>
            <person name="Mohanraj B.K."/>
            <person name="Eddy R.L."/>
            <person name="Shows T.B."/>
            <person name="White P.C."/>
            <person name="Dupont B."/>
        </authorList>
    </citation>
    <scope>NUCLEOTIDE SEQUENCE [GENOMIC DNA]</scope>
</reference>
<reference key="3">
    <citation type="journal article" date="2007" name="Scand. J. Immunol.">
        <title>Human Soluble CD80 is generated by alternative splicing, and recombinant soluble CD80 binds to CD28 and CD152 influencing T-cell activation.</title>
        <authorList>
            <person name="Kakoulidou M."/>
            <person name="Giscombe R."/>
            <person name="Zhao X."/>
            <person name="Lefvert A.K."/>
            <person name="Wang X."/>
        </authorList>
    </citation>
    <scope>NUCLEOTIDE SEQUENCE [MRNA] (ISOFORMS 2 AND 3)</scope>
    <scope>ALTERNATIVE SPLICING</scope>
</reference>
<reference key="4">
    <citation type="journal article" date="2006" name="Nature">
        <title>The DNA sequence, annotation and analysis of human chromosome 3.</title>
        <authorList>
            <person name="Muzny D.M."/>
            <person name="Scherer S.E."/>
            <person name="Kaul R."/>
            <person name="Wang J."/>
            <person name="Yu J."/>
            <person name="Sudbrak R."/>
            <person name="Buhay C.J."/>
            <person name="Chen R."/>
            <person name="Cree A."/>
            <person name="Ding Y."/>
            <person name="Dugan-Rocha S."/>
            <person name="Gill R."/>
            <person name="Gunaratne P."/>
            <person name="Harris R.A."/>
            <person name="Hawes A.C."/>
            <person name="Hernandez J."/>
            <person name="Hodgson A.V."/>
            <person name="Hume J."/>
            <person name="Jackson A."/>
            <person name="Khan Z.M."/>
            <person name="Kovar-Smith C."/>
            <person name="Lewis L.R."/>
            <person name="Lozado R.J."/>
            <person name="Metzker M.L."/>
            <person name="Milosavljevic A."/>
            <person name="Miner G.R."/>
            <person name="Morgan M.B."/>
            <person name="Nazareth L.V."/>
            <person name="Scott G."/>
            <person name="Sodergren E."/>
            <person name="Song X.-Z."/>
            <person name="Steffen D."/>
            <person name="Wei S."/>
            <person name="Wheeler D.A."/>
            <person name="Wright M.W."/>
            <person name="Worley K.C."/>
            <person name="Yuan Y."/>
            <person name="Zhang Z."/>
            <person name="Adams C.Q."/>
            <person name="Ansari-Lari M.A."/>
            <person name="Ayele M."/>
            <person name="Brown M.J."/>
            <person name="Chen G."/>
            <person name="Chen Z."/>
            <person name="Clendenning J."/>
            <person name="Clerc-Blankenburg K.P."/>
            <person name="Chen R."/>
            <person name="Chen Z."/>
            <person name="Davis C."/>
            <person name="Delgado O."/>
            <person name="Dinh H.H."/>
            <person name="Dong W."/>
            <person name="Draper H."/>
            <person name="Ernst S."/>
            <person name="Fu G."/>
            <person name="Gonzalez-Garay M.L."/>
            <person name="Garcia D.K."/>
            <person name="Gillett W."/>
            <person name="Gu J."/>
            <person name="Hao B."/>
            <person name="Haugen E."/>
            <person name="Havlak P."/>
            <person name="He X."/>
            <person name="Hennig S."/>
            <person name="Hu S."/>
            <person name="Huang W."/>
            <person name="Jackson L.R."/>
            <person name="Jacob L.S."/>
            <person name="Kelly S.H."/>
            <person name="Kube M."/>
            <person name="Levy R."/>
            <person name="Li Z."/>
            <person name="Liu B."/>
            <person name="Liu J."/>
            <person name="Liu W."/>
            <person name="Lu J."/>
            <person name="Maheshwari M."/>
            <person name="Nguyen B.-V."/>
            <person name="Okwuonu G.O."/>
            <person name="Palmeiri A."/>
            <person name="Pasternak S."/>
            <person name="Perez L.M."/>
            <person name="Phelps K.A."/>
            <person name="Plopper F.J."/>
            <person name="Qiang B."/>
            <person name="Raymond C."/>
            <person name="Rodriguez R."/>
            <person name="Saenphimmachak C."/>
            <person name="Santibanez J."/>
            <person name="Shen H."/>
            <person name="Shen Y."/>
            <person name="Subramanian S."/>
            <person name="Tabor P.E."/>
            <person name="Verduzco D."/>
            <person name="Waldron L."/>
            <person name="Wang J."/>
            <person name="Wang J."/>
            <person name="Wang Q."/>
            <person name="Williams G.A."/>
            <person name="Wong G.K.-S."/>
            <person name="Yao Z."/>
            <person name="Zhang J."/>
            <person name="Zhang X."/>
            <person name="Zhao G."/>
            <person name="Zhou J."/>
            <person name="Zhou Y."/>
            <person name="Nelson D."/>
            <person name="Lehrach H."/>
            <person name="Reinhardt R."/>
            <person name="Naylor S.L."/>
            <person name="Yang H."/>
            <person name="Olson M."/>
            <person name="Weinstock G."/>
            <person name="Gibbs R.A."/>
        </authorList>
    </citation>
    <scope>NUCLEOTIDE SEQUENCE [LARGE SCALE GENOMIC DNA]</scope>
</reference>
<reference key="5">
    <citation type="journal article" date="2004" name="Genome Res.">
        <title>The status, quality, and expansion of the NIH full-length cDNA project: the Mammalian Gene Collection (MGC).</title>
        <authorList>
            <consortium name="The MGC Project Team"/>
        </authorList>
    </citation>
    <scope>NUCLEOTIDE SEQUENCE [LARGE SCALE MRNA] (ISOFORM 1)</scope>
    <source>
        <tissue>Brain</tissue>
    </source>
</reference>
<reference key="6">
    <citation type="journal article" date="1991" name="J. Exp. Med.">
        <title>Structure, expression, and T cell costimulatory activity of the murine homologue of the human B lymphocyte activation antigen B7.</title>
        <authorList>
            <person name="Freeman G.J."/>
            <person name="Gray G.S."/>
            <person name="Gimmi C.D."/>
            <person name="Lombard D.B."/>
            <person name="Zhou L.-J."/>
            <person name="White M."/>
            <person name="Fingeroth J.D."/>
            <person name="Gribben J.G."/>
            <person name="Nadler L.M."/>
        </authorList>
    </citation>
    <scope>PROTEIN SEQUENCE OF 35-38</scope>
</reference>
<reference key="7">
    <citation type="journal article" date="1995" name="J. Immunol.">
        <title>CD80 (B7) and CD86 (B70) provide similar costimulatory signals for T cell proliferation, cytokine production, and generation of CTL.</title>
        <authorList>
            <person name="Lanier L.L."/>
            <person name="O'Fallon S."/>
            <person name="Somoza C."/>
            <person name="Phillips J.H."/>
            <person name="Linsley P.S."/>
            <person name="Okumura K."/>
            <person name="Ito D."/>
            <person name="Azuma M."/>
        </authorList>
    </citation>
    <scope>CHARACTERIZATION</scope>
</reference>
<reference key="8">
    <citation type="journal article" date="1999" name="Immunology">
        <title>Interaction of CTLA-4 (CD152) with CD80 or CD86 inhibits human T-cell activation.</title>
        <authorList>
            <person name="Vandenborre K."/>
            <person name="Van Gool S.W."/>
            <person name="Kasran A."/>
            <person name="Ceuppens J.L."/>
            <person name="Boogaerts M.A."/>
            <person name="Vandenberghe P."/>
        </authorList>
    </citation>
    <scope>FUNCTION</scope>
    <scope>INTERACTION WITH CTLA4</scope>
</reference>
<reference key="9">
    <citation type="journal article" date="1999" name="J. Immunol.">
        <title>IL-2-independent activation and proliferation in human T cells induced by CD28.</title>
        <authorList>
            <person name="Boulougouris G."/>
            <person name="McLeod J.D."/>
            <person name="Patel Y.I."/>
            <person name="Ellwood C.N."/>
            <person name="Walker L.S."/>
            <person name="Sansom D.M."/>
        </authorList>
    </citation>
    <scope>FUNCTION</scope>
</reference>
<reference key="10">
    <citation type="journal article" date="2002" name="Immunity">
        <title>The CD28 signaling pathway regulates glucose metabolism.</title>
        <authorList>
            <person name="Frauwirth K.A."/>
            <person name="Riley J.L."/>
            <person name="Harris M.H."/>
            <person name="Parry R.V."/>
            <person name="Rathmell J.C."/>
            <person name="Plas D.R."/>
            <person name="Elstrom R.L."/>
            <person name="June C.H."/>
            <person name="Thompson C.B."/>
        </authorList>
    </citation>
    <scope>FUNCTION</scope>
</reference>
<reference key="11">
    <citation type="journal article" date="2002" name="Immunity">
        <title>The interaction properties of costimulatory molecules revisited.</title>
        <authorList>
            <person name="Collins A.V."/>
            <person name="Brodie D.W."/>
            <person name="Gilbert R.J."/>
            <person name="Iaboni A."/>
            <person name="Manso-Sancho R."/>
            <person name="Walse B."/>
            <person name="Stuart D.I."/>
            <person name="van der Merwe P.A."/>
            <person name="Davis S.J."/>
        </authorList>
    </citation>
    <scope>INTERACTION WITH CD28</scope>
    <scope>FUNCTION</scope>
</reference>
<reference key="12">
    <citation type="journal article" date="2006" name="Virus Res.">
        <title>Members of adenovirus species B utilize CD80 and CD86 as cellular attachment receptors.</title>
        <authorList>
            <person name="Short J.J."/>
            <person name="Vasu C."/>
            <person name="Holterman M.J."/>
            <person name="Curiel D.T."/>
            <person name="Pereboev A."/>
        </authorList>
    </citation>
    <scope>FUNCTION (MICROBIAL INFECTION)</scope>
    <scope>INTERACTION WITH ADENOVIRUS SUBGROUP B FIBER PROTEINS</scope>
</reference>
<reference key="13">
    <citation type="journal article" date="2013" name="J. Proteome Res.">
        <title>Toward a comprehensive characterization of a human cancer cell phosphoproteome.</title>
        <authorList>
            <person name="Zhou H."/>
            <person name="Di Palma S."/>
            <person name="Preisinger C."/>
            <person name="Peng M."/>
            <person name="Polat A.N."/>
            <person name="Heck A.J."/>
            <person name="Mohammed S."/>
        </authorList>
    </citation>
    <scope>PHOSPHORYLATION [LARGE SCALE ANALYSIS] AT SER-284</scope>
    <scope>IDENTIFICATION BY MASS SPECTROMETRY [LARGE SCALE ANALYSIS]</scope>
    <source>
        <tissue>Erythroleukemia</tissue>
    </source>
</reference>
<reference key="14">
    <citation type="journal article" date="2019" name="J. Virol.">
        <title>By Binding CD80 and CD86, the Vaccinia Virus M2 Protein Blocks Their Interactions with both CD28 and CTLA4 and Potentiates CD80 Binding to PD-L1.</title>
        <authorList>
            <person name="Kleinpeter P."/>
            <person name="Remy-Ziller C."/>
            <person name="Winter E."/>
            <person name="Gantzer M."/>
            <person name="Nourtier V."/>
            <person name="Kempf J."/>
            <person name="Hortelano J."/>
            <person name="Schmitt D."/>
            <person name="Schultz H."/>
            <person name="Geist M."/>
            <person name="Brua C."/>
            <person name="Hoffmann C."/>
            <person name="Schlesinger Y."/>
            <person name="Villeval D."/>
            <person name="Thioudellet C."/>
            <person name="Erbs P."/>
            <person name="Foloppe J."/>
            <person name="Silvestre N."/>
            <person name="Fend L."/>
            <person name="Quemeneur E."/>
            <person name="Marchand J.B."/>
        </authorList>
    </citation>
    <scope>FUNCTION (MICROBIAL INFECTION)</scope>
    <scope>INTERACTION WITH VACCINIA VIRUS OPG038/M2 PROTEIN</scope>
</reference>
<reference key="15">
    <citation type="journal article" date="2023" name="EMBO J.">
        <title>The CTLA-4 immune checkpoint protein regulates PD-L1:PD-1 interaction via transendocytosis of its ligand CD80.</title>
        <authorList>
            <person name="Kennedy A."/>
            <person name="Robinson M.A."/>
            <person name="Hinze C."/>
            <person name="Waters E."/>
            <person name="Williams C."/>
            <person name="Halliday N."/>
            <person name="Dovedi S."/>
            <person name="Sansom D.M."/>
        </authorList>
    </citation>
    <scope>FUNCTION</scope>
    <scope>INTERACTION WITH PDL1/CD274</scope>
</reference>
<reference key="16">
    <citation type="journal article" date="2024" name="Acta Pharmacol. Sin.">
        <title>zDHHC20-driven S-palmitoylation of CD80 is required for its costimulatory function.</title>
        <authorList>
            <person name="Lu B."/>
            <person name="Sun Y.Y."/>
            <person name="Chen B.Y."/>
            <person name="Yang B."/>
            <person name="He Q.J."/>
            <person name="Li J."/>
            <person name="Cao J."/>
        </authorList>
    </citation>
    <scope>FUNCTION</scope>
    <scope>PALMITOYLATION AT CYS-261; CYS-262; CYS-266 AND CYS-271</scope>
    <scope>SUBCELLULAR LOCATION</scope>
    <scope>MUTAGENESIS OF CYS-261; CYS-262; CYS-266 AND CYS-271</scope>
</reference>
<reference key="17">
    <citation type="journal article" date="2000" name="Immunity">
        <title>Structure and dimerization of a soluble form of B7-1.</title>
        <authorList>
            <person name="Ikemizu S."/>
            <person name="Gilbert R.J."/>
            <person name="Fennelly J.A."/>
            <person name="Collins A.V."/>
            <person name="Harlos K."/>
            <person name="Jones E.Y."/>
            <person name="Stuart D.I."/>
            <person name="Davis S.J."/>
        </authorList>
    </citation>
    <scope>X-RAY CRYSTALLOGRAPHY (3.0 ANGSTROMS) OF 35-234</scope>
</reference>
<reference key="18">
    <citation type="journal article" date="2001" name="Nature">
        <title>Crystal structure of the B7-1/CTLA-4 complex that inhibits human immune responses.</title>
        <authorList>
            <person name="Stamper C.C."/>
            <person name="Zhang Y."/>
            <person name="Tobin J.F."/>
            <person name="Erbe D.V."/>
            <person name="Ikemizu S."/>
            <person name="Davis S.J."/>
            <person name="Stahl M.L."/>
            <person name="Seehra J."/>
            <person name="Somers W.S."/>
            <person name="Mosyak L."/>
        </authorList>
    </citation>
    <scope>X-RAY CRYSTALLOGRAPHY (3.0 ANGSTROMS) OF 35-242 IN COMPLEX WITH CTLA4</scope>
    <scope>SUBUNIT</scope>
    <scope>DISULFIDE BONDS</scope>
    <scope>GLYCOSYLATION AT ASN-53; ASN-89; ASN-186; ASN-207 AND ASN-226</scope>
</reference>
<comment type="function">
    <text evidence="1 4 5 7 8 12 13">Costimulatory molecule that belongs to the immunoglobulin superfamily that plays an important role in T-lymphocyte activation (PubMed:38467718). Acts as the primary auxiliary signal augmenting the MHC/TCR signal in naive T-cells together with the CD28 receptor which is constitutively expressed on the cell surface of T-cells (PubMed:12196291). In turn, activates different signaling pathways such as NF-kappa-B or MAPK leading to the production of different cytokines (PubMed:10438913). In addition, CD28/CD80 costimulatory signal stimulates glucose metabolism and ATP synthesis of T-cells by activating the PI3K/Akt signaling pathway (PubMed:12121659). Also acts as a regulator of PDL1/PDCD1 interactions to limit excess engagement of PDL1 and its inhibitory role in immune responses (PubMed:36727298). Expressed on B-cells, plays a critical role in regulating interactions between B-cells and T-cells in both early and late germinal center responses, which are crucial for the generation of effective humoral immune responses (By similarity).</text>
</comment>
<comment type="function">
    <text evidence="9">(Microbial infection) Acts as a receptor for adenovirus subgroup B.</text>
</comment>
<comment type="subunit">
    <text evidence="5 6 8 12">Homodimer. Interacts with CTLA4; this interaction inhibits T-cell activation (PubMed:10583602, PubMed:11279502). Interacts with PDL1/CD274; this interaction blocks PDL1/PDCD1 binding and thus PDL1/CD274 inhibitory function (PubMed:36727298). Interacts with CD28 (PubMed:12196291).</text>
</comment>
<comment type="subunit">
    <text evidence="9">(Microbial infection) Interacts with adenovirus subgroup B fiber proteins.</text>
</comment>
<comment type="subunit">
    <text evidence="11">(Microbial infection) Interacts with Orthopoxvirus OPG038/M2 protein, inhibiting the interaction with CTLA4/CD152.</text>
</comment>
<comment type="interaction">
    <interactant intactId="EBI-1031024">
        <id>P33681</id>
    </interactant>
    <interactant intactId="EBI-4314282">
        <id>Q9NZQ7</id>
        <label>CD274</label>
    </interactant>
    <organismsDiffer>false</organismsDiffer>
    <experiments>11</experiments>
</comment>
<comment type="interaction">
    <interactant intactId="EBI-1031024">
        <id>P33681</id>
    </interactant>
    <interactant intactId="EBI-1030991">
        <id>P16410</id>
        <label>CTLA4</label>
    </interactant>
    <organismsDiffer>false</organismsDiffer>
    <experiments>7</experiments>
</comment>
<comment type="interaction">
    <interactant intactId="EBI-1031024">
        <id>P33681</id>
    </interactant>
    <interactant intactId="EBI-1387782">
        <id>P08138</id>
        <label>NGFR</label>
    </interactant>
    <organismsDiffer>false</organismsDiffer>
    <experiments>3</experiments>
</comment>
<comment type="subcellular location">
    <subcellularLocation>
        <location evidence="13">Cell membrane</location>
        <topology>Single-pass type I membrane protein</topology>
    </subcellularLocation>
</comment>
<comment type="alternative products">
    <event type="alternative splicing"/>
    <isoform>
        <id>P33681-1</id>
        <name>1</name>
        <sequence type="displayed"/>
    </isoform>
    <isoform>
        <id>P33681-2</id>
        <name>2</name>
        <name>s1CD80</name>
        <sequence type="described" ref="VSP_047700"/>
    </isoform>
    <isoform>
        <id>P33681-3</id>
        <name>3</name>
        <name>s2CD80</name>
        <sequence type="described" ref="VSP_047698 VSP_047699"/>
    </isoform>
</comment>
<comment type="tissue specificity">
    <text>Expressed on activated B-cells, macrophages and dendritic cells.</text>
</comment>
<comment type="PTM">
    <text evidence="13">Palmitoylated by ZDHHC20; palmitoylation protects CD80 from ubiquitin-mediated degradation, regulating the protein stability, and ensures its accurate plasma membrane localization.</text>
</comment>
<comment type="miscellaneous">
    <molecule>Isoform 2</molecule>
    <text evidence="15">Soluble isoform. Expressed in unstimulated B-cells and monocytes, but not T-cells.</text>
</comment>
<comment type="miscellaneous">
    <molecule>Isoform 3</molecule>
    <text evidence="15">Soluble isoform. Expressed in T-cells activated by ConA, non-activated monocytes and monocytes activated with IFN-c.</text>
</comment>
<sequence>MGHTRRQGTSPSKCPYLNFFQLLVLAGLSHFCSGVIHVTKEVKEVATLSCGHNVSVEELAQTRIYWQKEKKMVLTMMSGDMNIWPEYKNRTIFDITNNLSIVILALRPSDEGTYECVVLKYEKDAFKREHLAEVTLSVKADFPTPSISDFEIPTSNIRRIICSTSGGFPEPHLSWLENGEELNAINTTVSQDPETELYAVSSKLDFNMTTNHSFMCLIKYGHLRVNQTFNWNTTKQEHFPDNLLPSWAITLISVNGIFVICCLTYCFAPRCRERRRNERLRRESVRPV</sequence>
<protein>
    <recommendedName>
        <fullName>T-lymphocyte activation antigen CD80</fullName>
    </recommendedName>
    <alternativeName>
        <fullName>Activation B7-1 antigen</fullName>
    </alternativeName>
    <alternativeName>
        <fullName>BB1</fullName>
    </alternativeName>
    <alternativeName>
        <fullName>CTLA-4 counter-receptor B7.1</fullName>
        <shortName>B7</shortName>
    </alternativeName>
    <cdAntigenName>CD80</cdAntigenName>
</protein>
<name>CD80_HUMAN</name>
<organism>
    <name type="scientific">Homo sapiens</name>
    <name type="common">Human</name>
    <dbReference type="NCBI Taxonomy" id="9606"/>
    <lineage>
        <taxon>Eukaryota</taxon>
        <taxon>Metazoa</taxon>
        <taxon>Chordata</taxon>
        <taxon>Craniata</taxon>
        <taxon>Vertebrata</taxon>
        <taxon>Euteleostomi</taxon>
        <taxon>Mammalia</taxon>
        <taxon>Eutheria</taxon>
        <taxon>Euarchontoglires</taxon>
        <taxon>Primates</taxon>
        <taxon>Haplorrhini</taxon>
        <taxon>Catarrhini</taxon>
        <taxon>Hominidae</taxon>
        <taxon>Homo</taxon>
    </lineage>
</organism>
<proteinExistence type="evidence at protein level"/>
<gene>
    <name type="primary">CD80</name>
    <name type="synonym">CD28LG</name>
    <name type="synonym">CD28LG1</name>
    <name type="synonym">LAB7</name>
</gene>